<keyword id="KW-0488">Methylation</keyword>
<keyword id="KW-1185">Reference proteome</keyword>
<keyword id="KW-0687">Ribonucleoprotein</keyword>
<keyword id="KW-0689">Ribosomal protein</keyword>
<keyword id="KW-0694">RNA-binding</keyword>
<keyword id="KW-0699">rRNA-binding</keyword>
<keyword id="KW-0820">tRNA-binding</keyword>
<dbReference type="EMBL" id="CP000251">
    <property type="protein sequence ID" value="ABC81721.1"/>
    <property type="molecule type" value="Genomic_DNA"/>
</dbReference>
<dbReference type="RefSeq" id="WP_011421003.1">
    <property type="nucleotide sequence ID" value="NC_007760.1"/>
</dbReference>
<dbReference type="SMR" id="Q2IJ91"/>
<dbReference type="STRING" id="290397.Adeh_1950"/>
<dbReference type="KEGG" id="ade:Adeh_1950"/>
<dbReference type="eggNOG" id="COG0048">
    <property type="taxonomic scope" value="Bacteria"/>
</dbReference>
<dbReference type="HOGENOM" id="CLU_104295_1_2_7"/>
<dbReference type="OrthoDB" id="9802366at2"/>
<dbReference type="Proteomes" id="UP000001935">
    <property type="component" value="Chromosome"/>
</dbReference>
<dbReference type="GO" id="GO:0015935">
    <property type="term" value="C:small ribosomal subunit"/>
    <property type="evidence" value="ECO:0007669"/>
    <property type="project" value="InterPro"/>
</dbReference>
<dbReference type="GO" id="GO:0019843">
    <property type="term" value="F:rRNA binding"/>
    <property type="evidence" value="ECO:0007669"/>
    <property type="project" value="UniProtKB-UniRule"/>
</dbReference>
<dbReference type="GO" id="GO:0003735">
    <property type="term" value="F:structural constituent of ribosome"/>
    <property type="evidence" value="ECO:0007669"/>
    <property type="project" value="InterPro"/>
</dbReference>
<dbReference type="GO" id="GO:0000049">
    <property type="term" value="F:tRNA binding"/>
    <property type="evidence" value="ECO:0007669"/>
    <property type="project" value="UniProtKB-UniRule"/>
</dbReference>
<dbReference type="GO" id="GO:0006412">
    <property type="term" value="P:translation"/>
    <property type="evidence" value="ECO:0007669"/>
    <property type="project" value="UniProtKB-UniRule"/>
</dbReference>
<dbReference type="CDD" id="cd03368">
    <property type="entry name" value="Ribosomal_S12"/>
    <property type="match status" value="1"/>
</dbReference>
<dbReference type="FunFam" id="2.40.50.140:FF:000001">
    <property type="entry name" value="30S ribosomal protein S12"/>
    <property type="match status" value="1"/>
</dbReference>
<dbReference type="Gene3D" id="2.40.50.140">
    <property type="entry name" value="Nucleic acid-binding proteins"/>
    <property type="match status" value="1"/>
</dbReference>
<dbReference type="HAMAP" id="MF_00403_B">
    <property type="entry name" value="Ribosomal_uS12_B"/>
    <property type="match status" value="1"/>
</dbReference>
<dbReference type="InterPro" id="IPR012340">
    <property type="entry name" value="NA-bd_OB-fold"/>
</dbReference>
<dbReference type="InterPro" id="IPR006032">
    <property type="entry name" value="Ribosomal_uS12"/>
</dbReference>
<dbReference type="InterPro" id="IPR005679">
    <property type="entry name" value="Ribosomal_uS12_bac"/>
</dbReference>
<dbReference type="NCBIfam" id="TIGR00981">
    <property type="entry name" value="rpsL_bact"/>
    <property type="match status" value="1"/>
</dbReference>
<dbReference type="PANTHER" id="PTHR11652">
    <property type="entry name" value="30S RIBOSOMAL PROTEIN S12 FAMILY MEMBER"/>
    <property type="match status" value="1"/>
</dbReference>
<dbReference type="Pfam" id="PF00164">
    <property type="entry name" value="Ribosom_S12_S23"/>
    <property type="match status" value="1"/>
</dbReference>
<dbReference type="PIRSF" id="PIRSF002133">
    <property type="entry name" value="Ribosomal_S12/S23"/>
    <property type="match status" value="1"/>
</dbReference>
<dbReference type="PRINTS" id="PR01034">
    <property type="entry name" value="RIBOSOMALS12"/>
</dbReference>
<dbReference type="SUPFAM" id="SSF50249">
    <property type="entry name" value="Nucleic acid-binding proteins"/>
    <property type="match status" value="1"/>
</dbReference>
<dbReference type="PROSITE" id="PS00055">
    <property type="entry name" value="RIBOSOMAL_S12"/>
    <property type="match status" value="1"/>
</dbReference>
<proteinExistence type="inferred from homology"/>
<gene>
    <name evidence="2" type="primary">rpsL</name>
    <name type="ordered locus">Adeh_1950</name>
</gene>
<name>RS12_ANADE</name>
<sequence>MPTISQLVRRGRERLQVKKKAPALKESPQKRGVCTRVYTTTPKKPNSALRKVARVRLTNGFEVTSYIPGVGHNLQEHSVVLIRGGRVKDLPGVRYHIIRGTLDAVGVQGRKQGRSKYGAKRAS</sequence>
<protein>
    <recommendedName>
        <fullName evidence="2">Small ribosomal subunit protein uS12</fullName>
    </recommendedName>
    <alternativeName>
        <fullName evidence="3">30S ribosomal protein S12</fullName>
    </alternativeName>
</protein>
<comment type="function">
    <text evidence="2">With S4 and S5 plays an important role in translational accuracy.</text>
</comment>
<comment type="function">
    <text evidence="2">Interacts with and stabilizes bases of the 16S rRNA that are involved in tRNA selection in the A site and with the mRNA backbone. Located at the interface of the 30S and 50S subunits, it traverses the body of the 30S subunit contacting proteins on the other side and probably holding the rRNA structure together. The combined cluster of proteins S8, S12 and S17 appears to hold together the shoulder and platform of the 30S subunit.</text>
</comment>
<comment type="subunit">
    <text evidence="2">Part of the 30S ribosomal subunit. Contacts proteins S8 and S17. May interact with IF1 in the 30S initiation complex.</text>
</comment>
<comment type="similarity">
    <text evidence="2">Belongs to the universal ribosomal protein uS12 family.</text>
</comment>
<feature type="chain" id="PRO_0000238126" description="Small ribosomal subunit protein uS12">
    <location>
        <begin position="1"/>
        <end position="123"/>
    </location>
</feature>
<feature type="modified residue" description="3-methylthioaspartic acid" evidence="1">
    <location>
        <position position="89"/>
    </location>
</feature>
<reference key="1">
    <citation type="submission" date="2006-01" db="EMBL/GenBank/DDBJ databases">
        <title>Complete sequence of Anaeromyxobacter dehalogenans 2CP-C.</title>
        <authorList>
            <person name="Copeland A."/>
            <person name="Lucas S."/>
            <person name="Lapidus A."/>
            <person name="Barry K."/>
            <person name="Detter J.C."/>
            <person name="Glavina T."/>
            <person name="Hammon N."/>
            <person name="Israni S."/>
            <person name="Pitluck S."/>
            <person name="Brettin T."/>
            <person name="Bruce D."/>
            <person name="Han C."/>
            <person name="Tapia R."/>
            <person name="Gilna P."/>
            <person name="Kiss H."/>
            <person name="Schmutz J."/>
            <person name="Larimer F."/>
            <person name="Land M."/>
            <person name="Kyrpides N."/>
            <person name="Anderson I."/>
            <person name="Sanford R.A."/>
            <person name="Ritalahti K.M."/>
            <person name="Thomas H.S."/>
            <person name="Kirby J.R."/>
            <person name="Zhulin I.B."/>
            <person name="Loeffler F.E."/>
            <person name="Richardson P."/>
        </authorList>
    </citation>
    <scope>NUCLEOTIDE SEQUENCE [LARGE SCALE GENOMIC DNA]</scope>
    <source>
        <strain>2CP-C</strain>
    </source>
</reference>
<evidence type="ECO:0000250" key="1"/>
<evidence type="ECO:0000255" key="2">
    <source>
        <dbReference type="HAMAP-Rule" id="MF_00403"/>
    </source>
</evidence>
<evidence type="ECO:0000305" key="3"/>
<accession>Q2IJ91</accession>
<organism>
    <name type="scientific">Anaeromyxobacter dehalogenans (strain 2CP-C)</name>
    <dbReference type="NCBI Taxonomy" id="290397"/>
    <lineage>
        <taxon>Bacteria</taxon>
        <taxon>Pseudomonadati</taxon>
        <taxon>Myxococcota</taxon>
        <taxon>Myxococcia</taxon>
        <taxon>Myxococcales</taxon>
        <taxon>Cystobacterineae</taxon>
        <taxon>Anaeromyxobacteraceae</taxon>
        <taxon>Anaeromyxobacter</taxon>
    </lineage>
</organism>